<name>ASNA_STRZT</name>
<evidence type="ECO:0000255" key="1">
    <source>
        <dbReference type="HAMAP-Rule" id="MF_00555"/>
    </source>
</evidence>
<sequence>MKKSFIHQQEEISFVKNTFTQYLKDKLEVVEVQGPILSKVGDGMQDNLSGVENPVSVKVLQIPDATYEVVHSLAKWKRHTLARFGFGEGEGLFVHMKALRPDEDSLDATHSVYVDQWDWEKVIPNGKRNIVYLKETVEKIYKAIRLTELAVEARYDIESILPKQITFIHTEELVERYPDLTPKERENAICKEFGAVFLIGIGGELPDGKPHDGRAPDYDDWTSESENGYKGLNGDILVWNESLGGAFELSSMGIRVDEETLRRQVEITGDEDRLELEWHKSLLNGLFPLTIGGGIGQSRMAMFLLRKRHIGEVQTSVWPQEVRDTYENIL</sequence>
<proteinExistence type="inferred from homology"/>
<protein>
    <recommendedName>
        <fullName evidence="1">Aspartate--ammonia ligase</fullName>
        <ecNumber evidence="1">6.3.1.1</ecNumber>
    </recommendedName>
    <alternativeName>
        <fullName evidence="1">Asparagine synthetase A</fullName>
    </alternativeName>
</protein>
<accession>C1CTM5</accession>
<feature type="chain" id="PRO_1000146703" description="Aspartate--ammonia ligase">
    <location>
        <begin position="1"/>
        <end position="330"/>
    </location>
</feature>
<gene>
    <name evidence="1" type="primary">asnA</name>
    <name type="ordered locus">SPT_1950</name>
</gene>
<organism>
    <name type="scientific">Streptococcus pneumoniae (strain Taiwan19F-14)</name>
    <dbReference type="NCBI Taxonomy" id="487213"/>
    <lineage>
        <taxon>Bacteria</taxon>
        <taxon>Bacillati</taxon>
        <taxon>Bacillota</taxon>
        <taxon>Bacilli</taxon>
        <taxon>Lactobacillales</taxon>
        <taxon>Streptococcaceae</taxon>
        <taxon>Streptococcus</taxon>
    </lineage>
</organism>
<dbReference type="EC" id="6.3.1.1" evidence="1"/>
<dbReference type="EMBL" id="CP000921">
    <property type="protein sequence ID" value="ACO22901.1"/>
    <property type="molecule type" value="Genomic_DNA"/>
</dbReference>
<dbReference type="RefSeq" id="WP_000747993.1">
    <property type="nucleotide sequence ID" value="NC_012469.1"/>
</dbReference>
<dbReference type="SMR" id="C1CTM5"/>
<dbReference type="GeneID" id="45652817"/>
<dbReference type="KEGG" id="snt:SPT_1950"/>
<dbReference type="HOGENOM" id="CLU_071543_0_0_9"/>
<dbReference type="UniPathway" id="UPA00134">
    <property type="reaction ID" value="UER00194"/>
</dbReference>
<dbReference type="GO" id="GO:0005829">
    <property type="term" value="C:cytosol"/>
    <property type="evidence" value="ECO:0007669"/>
    <property type="project" value="TreeGrafter"/>
</dbReference>
<dbReference type="GO" id="GO:0004071">
    <property type="term" value="F:aspartate-ammonia ligase activity"/>
    <property type="evidence" value="ECO:0007669"/>
    <property type="project" value="UniProtKB-UniRule"/>
</dbReference>
<dbReference type="GO" id="GO:0005524">
    <property type="term" value="F:ATP binding"/>
    <property type="evidence" value="ECO:0007669"/>
    <property type="project" value="UniProtKB-UniRule"/>
</dbReference>
<dbReference type="GO" id="GO:0140096">
    <property type="term" value="F:catalytic activity, acting on a protein"/>
    <property type="evidence" value="ECO:0007669"/>
    <property type="project" value="UniProtKB-ARBA"/>
</dbReference>
<dbReference type="GO" id="GO:0016740">
    <property type="term" value="F:transferase activity"/>
    <property type="evidence" value="ECO:0007669"/>
    <property type="project" value="UniProtKB-ARBA"/>
</dbReference>
<dbReference type="GO" id="GO:0070981">
    <property type="term" value="P:L-asparagine biosynthetic process"/>
    <property type="evidence" value="ECO:0007669"/>
    <property type="project" value="UniProtKB-UniRule"/>
</dbReference>
<dbReference type="CDD" id="cd00645">
    <property type="entry name" value="AsnA"/>
    <property type="match status" value="1"/>
</dbReference>
<dbReference type="Gene3D" id="3.30.930.10">
    <property type="entry name" value="Bira Bifunctional Protein, Domain 2"/>
    <property type="match status" value="1"/>
</dbReference>
<dbReference type="HAMAP" id="MF_00555">
    <property type="entry name" value="AsnA"/>
    <property type="match status" value="1"/>
</dbReference>
<dbReference type="InterPro" id="IPR006195">
    <property type="entry name" value="aa-tRNA-synth_II"/>
</dbReference>
<dbReference type="InterPro" id="IPR045864">
    <property type="entry name" value="aa-tRNA-synth_II/BPL/LPL"/>
</dbReference>
<dbReference type="InterPro" id="IPR004618">
    <property type="entry name" value="AsnA"/>
</dbReference>
<dbReference type="NCBIfam" id="TIGR00669">
    <property type="entry name" value="asnA"/>
    <property type="match status" value="1"/>
</dbReference>
<dbReference type="PANTHER" id="PTHR30073">
    <property type="entry name" value="ASPARTATE--AMMONIA LIGASE"/>
    <property type="match status" value="1"/>
</dbReference>
<dbReference type="PANTHER" id="PTHR30073:SF5">
    <property type="entry name" value="ASPARTATE--AMMONIA LIGASE"/>
    <property type="match status" value="1"/>
</dbReference>
<dbReference type="Pfam" id="PF03590">
    <property type="entry name" value="AsnA"/>
    <property type="match status" value="1"/>
</dbReference>
<dbReference type="PIRSF" id="PIRSF001555">
    <property type="entry name" value="Asp_ammon_ligase"/>
    <property type="match status" value="1"/>
</dbReference>
<dbReference type="SUPFAM" id="SSF55681">
    <property type="entry name" value="Class II aaRS and biotin synthetases"/>
    <property type="match status" value="1"/>
</dbReference>
<dbReference type="PROSITE" id="PS50862">
    <property type="entry name" value="AA_TRNA_LIGASE_II"/>
    <property type="match status" value="1"/>
</dbReference>
<reference key="1">
    <citation type="journal article" date="2010" name="Genome Biol.">
        <title>Structure and dynamics of the pan-genome of Streptococcus pneumoniae and closely related species.</title>
        <authorList>
            <person name="Donati C."/>
            <person name="Hiller N.L."/>
            <person name="Tettelin H."/>
            <person name="Muzzi A."/>
            <person name="Croucher N.J."/>
            <person name="Angiuoli S.V."/>
            <person name="Oggioni M."/>
            <person name="Dunning Hotopp J.C."/>
            <person name="Hu F.Z."/>
            <person name="Riley D.R."/>
            <person name="Covacci A."/>
            <person name="Mitchell T.J."/>
            <person name="Bentley S.D."/>
            <person name="Kilian M."/>
            <person name="Ehrlich G.D."/>
            <person name="Rappuoli R."/>
            <person name="Moxon E.R."/>
            <person name="Masignani V."/>
        </authorList>
    </citation>
    <scope>NUCLEOTIDE SEQUENCE [LARGE SCALE GENOMIC DNA]</scope>
    <source>
        <strain>Taiwan19F-14</strain>
    </source>
</reference>
<keyword id="KW-0028">Amino-acid biosynthesis</keyword>
<keyword id="KW-0061">Asparagine biosynthesis</keyword>
<keyword id="KW-0067">ATP-binding</keyword>
<keyword id="KW-0963">Cytoplasm</keyword>
<keyword id="KW-0436">Ligase</keyword>
<keyword id="KW-0547">Nucleotide-binding</keyword>
<comment type="catalytic activity">
    <reaction evidence="1">
        <text>L-aspartate + NH4(+) + ATP = L-asparagine + AMP + diphosphate + H(+)</text>
        <dbReference type="Rhea" id="RHEA:11372"/>
        <dbReference type="ChEBI" id="CHEBI:15378"/>
        <dbReference type="ChEBI" id="CHEBI:28938"/>
        <dbReference type="ChEBI" id="CHEBI:29991"/>
        <dbReference type="ChEBI" id="CHEBI:30616"/>
        <dbReference type="ChEBI" id="CHEBI:33019"/>
        <dbReference type="ChEBI" id="CHEBI:58048"/>
        <dbReference type="ChEBI" id="CHEBI:456215"/>
        <dbReference type="EC" id="6.3.1.1"/>
    </reaction>
</comment>
<comment type="pathway">
    <text evidence="1">Amino-acid biosynthesis; L-asparagine biosynthesis; L-asparagine from L-aspartate (ammonia route): step 1/1.</text>
</comment>
<comment type="subcellular location">
    <subcellularLocation>
        <location evidence="1">Cytoplasm</location>
    </subcellularLocation>
</comment>
<comment type="similarity">
    <text evidence="1">Belongs to the class-II aminoacyl-tRNA synthetase family. AsnA subfamily.</text>
</comment>